<protein>
    <recommendedName>
        <fullName evidence="1">Probable aspartoacylase</fullName>
        <ecNumber evidence="1">3.5.1.15</ecNumber>
    </recommendedName>
</protein>
<proteinExistence type="inferred from homology"/>
<accession>P72208</accession>
<sequence>MSGIQVLLVAGTHGNEINAPWLFEQWKQKDSLINTHNINIQTVIGNPVALEQGKRYVDRDLNRSFRKDLLLSSDLNAAEHFRALELVSEYGPNGNNPCQIAIDFHSTTSSMGSSLVVYGRRPADLAIVSLIQNHLGLPIYLHEGDNAQSGFLVESWPCGFVVEVGPVPQGLLHFQIINQTLLTLDSCLKEISNVINSKTVYPEQLIVHRHLKNIDFPRDSSGVPSSLVHKDIQGRDWYPIKNGHPLFESLSGDLTLLLEGGLEEEFVPVFINEAAYAEKNIAMSLTKKEMWDVQKDWINDLSKLLNP</sequence>
<keyword id="KW-0378">Hydrolase</keyword>
<keyword id="KW-0479">Metal-binding</keyword>
<keyword id="KW-1185">Reference proteome</keyword>
<keyword id="KW-0862">Zinc</keyword>
<comment type="catalytic activity">
    <reaction evidence="1">
        <text>an N-acyl-L-aspartate + H2O = a carboxylate + L-aspartate</text>
        <dbReference type="Rhea" id="RHEA:10872"/>
        <dbReference type="ChEBI" id="CHEBI:15377"/>
        <dbReference type="ChEBI" id="CHEBI:29067"/>
        <dbReference type="ChEBI" id="CHEBI:29991"/>
        <dbReference type="ChEBI" id="CHEBI:58497"/>
        <dbReference type="EC" id="3.5.1.15"/>
    </reaction>
</comment>
<comment type="cofactor">
    <cofactor evidence="1">
        <name>Zn(2+)</name>
        <dbReference type="ChEBI" id="CHEBI:29105"/>
    </cofactor>
    <text evidence="1">Binds 1 zinc ion per subunit.</text>
</comment>
<comment type="similarity">
    <text evidence="1">Belongs to the AspA/AstE family. Aspartoacylase subfamily.</text>
</comment>
<name>ASPA_PROMA</name>
<reference key="1">
    <citation type="journal article" date="1997" name="DNA Seq.">
        <title>Localization of an open reading frame with homology to human aspartoacylase upstream from psbA in the prokaryote Prochlorococcus marinus CCMP 1375.</title>
        <authorList>
            <person name="Hess W.R."/>
        </authorList>
    </citation>
    <scope>NUCLEOTIDE SEQUENCE [GENOMIC DNA]</scope>
    <source>
        <strain>SARG / CCMP1375 / SS120</strain>
    </source>
</reference>
<reference key="2">
    <citation type="journal article" date="2003" name="Proc. Natl. Acad. Sci. U.S.A.">
        <title>Genome sequence of the cyanobacterium Prochlorococcus marinus SS120, a nearly minimal oxyphototrophic genome.</title>
        <authorList>
            <person name="Dufresne A."/>
            <person name="Salanoubat M."/>
            <person name="Partensky F."/>
            <person name="Artiguenave F."/>
            <person name="Axmann I.M."/>
            <person name="Barbe V."/>
            <person name="Duprat S."/>
            <person name="Galperin M.Y."/>
            <person name="Koonin E.V."/>
            <person name="Le Gall F."/>
            <person name="Makarova K.S."/>
            <person name="Ostrowski M."/>
            <person name="Oztas S."/>
            <person name="Robert C."/>
            <person name="Rogozin I.B."/>
            <person name="Scanlan D.J."/>
            <person name="Tandeau de Marsac N."/>
            <person name="Weissenbach J."/>
            <person name="Wincker P."/>
            <person name="Wolf Y.I."/>
            <person name="Hess W.R."/>
        </authorList>
    </citation>
    <scope>NUCLEOTIDE SEQUENCE [LARGE SCALE GENOMIC DNA]</scope>
    <source>
        <strain>SARG / CCMP1375 / SS120</strain>
    </source>
</reference>
<dbReference type="EC" id="3.5.1.15" evidence="1"/>
<dbReference type="EMBL" id="Z80110">
    <property type="protein sequence ID" value="CAB02200.1"/>
    <property type="molecule type" value="Genomic_DNA"/>
</dbReference>
<dbReference type="EMBL" id="AE017126">
    <property type="protein sequence ID" value="AAP99297.1"/>
    <property type="molecule type" value="Genomic_DNA"/>
</dbReference>
<dbReference type="RefSeq" id="NP_874645.1">
    <property type="nucleotide sequence ID" value="NC_005042.1"/>
</dbReference>
<dbReference type="RefSeq" id="WP_011124406.1">
    <property type="nucleotide sequence ID" value="NC_005042.1"/>
</dbReference>
<dbReference type="SMR" id="P72208"/>
<dbReference type="STRING" id="167539.Pro_0251"/>
<dbReference type="EnsemblBacteria" id="AAP99297">
    <property type="protein sequence ID" value="AAP99297"/>
    <property type="gene ID" value="Pro_0251"/>
</dbReference>
<dbReference type="KEGG" id="pma:Pro_0251"/>
<dbReference type="PATRIC" id="fig|167539.5.peg.259"/>
<dbReference type="eggNOG" id="COG2988">
    <property type="taxonomic scope" value="Bacteria"/>
</dbReference>
<dbReference type="HOGENOM" id="CLU_083292_0_0_3"/>
<dbReference type="OrthoDB" id="531770at2"/>
<dbReference type="Proteomes" id="UP000001420">
    <property type="component" value="Chromosome"/>
</dbReference>
<dbReference type="GO" id="GO:0005829">
    <property type="term" value="C:cytosol"/>
    <property type="evidence" value="ECO:0007669"/>
    <property type="project" value="TreeGrafter"/>
</dbReference>
<dbReference type="GO" id="GO:0019807">
    <property type="term" value="F:aspartoacylase activity"/>
    <property type="evidence" value="ECO:0007669"/>
    <property type="project" value="UniProtKB-UniRule"/>
</dbReference>
<dbReference type="GO" id="GO:0016788">
    <property type="term" value="F:hydrolase activity, acting on ester bonds"/>
    <property type="evidence" value="ECO:0007669"/>
    <property type="project" value="InterPro"/>
</dbReference>
<dbReference type="GO" id="GO:0008270">
    <property type="term" value="F:zinc ion binding"/>
    <property type="evidence" value="ECO:0007669"/>
    <property type="project" value="UniProtKB-UniRule"/>
</dbReference>
<dbReference type="CDD" id="cd06909">
    <property type="entry name" value="M14_ASPA"/>
    <property type="match status" value="1"/>
</dbReference>
<dbReference type="Gene3D" id="2.20.25.160">
    <property type="match status" value="1"/>
</dbReference>
<dbReference type="Gene3D" id="3.40.630.10">
    <property type="entry name" value="Zn peptidases"/>
    <property type="match status" value="1"/>
</dbReference>
<dbReference type="HAMAP" id="MF_00704">
    <property type="entry name" value="Aspartoacylase"/>
    <property type="match status" value="1"/>
</dbReference>
<dbReference type="InterPro" id="IPR050178">
    <property type="entry name" value="AspA/AstE_fam"/>
</dbReference>
<dbReference type="InterPro" id="IPR016708">
    <property type="entry name" value="Aspartoacylase"/>
</dbReference>
<dbReference type="InterPro" id="IPR055438">
    <property type="entry name" value="AstE_AspA_cat"/>
</dbReference>
<dbReference type="InterPro" id="IPR007036">
    <property type="entry name" value="Aste_AspA_hybrid_dom"/>
</dbReference>
<dbReference type="NCBIfam" id="NF002601">
    <property type="entry name" value="PRK02259.1"/>
    <property type="match status" value="1"/>
</dbReference>
<dbReference type="PANTHER" id="PTHR15162">
    <property type="entry name" value="ASPARTOACYLASE"/>
    <property type="match status" value="1"/>
</dbReference>
<dbReference type="PANTHER" id="PTHR15162:SF7">
    <property type="entry name" value="SUCCINYLGLUTAMATE DESUCCINYLASE"/>
    <property type="match status" value="1"/>
</dbReference>
<dbReference type="Pfam" id="PF24827">
    <property type="entry name" value="AstE_AspA_cat"/>
    <property type="match status" value="1"/>
</dbReference>
<dbReference type="Pfam" id="PF04952">
    <property type="entry name" value="AstE_AspA_hybrid"/>
    <property type="match status" value="1"/>
</dbReference>
<dbReference type="PIRSF" id="PIRSF018001">
    <property type="entry name" value="Aspartoacylase"/>
    <property type="match status" value="1"/>
</dbReference>
<dbReference type="SUPFAM" id="SSF53187">
    <property type="entry name" value="Zn-dependent exopeptidases"/>
    <property type="match status" value="1"/>
</dbReference>
<feature type="chain" id="PRO_0000216878" description="Probable aspartoacylase">
    <location>
        <begin position="1"/>
        <end position="307"/>
    </location>
</feature>
<feature type="binding site" evidence="1">
    <location>
        <position position="13"/>
    </location>
    <ligand>
        <name>Zn(2+)</name>
        <dbReference type="ChEBI" id="CHEBI:29105"/>
    </ligand>
</feature>
<feature type="binding site" evidence="1">
    <location>
        <position position="16"/>
    </location>
    <ligand>
        <name>Zn(2+)</name>
        <dbReference type="ChEBI" id="CHEBI:29105"/>
    </ligand>
</feature>
<feature type="binding site" evidence="1">
    <location>
        <position position="55"/>
    </location>
    <ligand>
        <name>substrate</name>
    </ligand>
</feature>
<feature type="binding site" evidence="1">
    <location>
        <begin position="62"/>
        <end position="63"/>
    </location>
    <ligand>
        <name>substrate</name>
    </ligand>
</feature>
<feature type="binding site" evidence="1">
    <location>
        <position position="105"/>
    </location>
    <ligand>
        <name>Zn(2+)</name>
        <dbReference type="ChEBI" id="CHEBI:29105"/>
    </ligand>
</feature>
<feature type="binding site" evidence="1">
    <location>
        <position position="163"/>
    </location>
    <ligand>
        <name>substrate</name>
    </ligand>
</feature>
<feature type="binding site" evidence="1">
    <location>
        <position position="276"/>
    </location>
    <ligand>
        <name>substrate</name>
    </ligand>
</feature>
<feature type="sequence conflict" description="In Ref. 1; CAB02200." evidence="2" ref="1">
    <original>L</original>
    <variation>V</variation>
    <location>
        <position position="71"/>
    </location>
</feature>
<feature type="sequence conflict" description="In Ref. 1; CAB02200." evidence="2" ref="1">
    <original>KDIQ</original>
    <variation>GDNP</variation>
    <location>
        <begin position="230"/>
        <end position="233"/>
    </location>
</feature>
<gene>
    <name type="ordered locus">Pro_0251</name>
</gene>
<evidence type="ECO:0000255" key="1">
    <source>
        <dbReference type="HAMAP-Rule" id="MF_00704"/>
    </source>
</evidence>
<evidence type="ECO:0000305" key="2"/>
<organism>
    <name type="scientific">Prochlorococcus marinus (strain SARG / CCMP1375 / SS120)</name>
    <dbReference type="NCBI Taxonomy" id="167539"/>
    <lineage>
        <taxon>Bacteria</taxon>
        <taxon>Bacillati</taxon>
        <taxon>Cyanobacteriota</taxon>
        <taxon>Cyanophyceae</taxon>
        <taxon>Synechococcales</taxon>
        <taxon>Prochlorococcaceae</taxon>
        <taxon>Prochlorococcus</taxon>
    </lineage>
</organism>